<accession>Q9ZM87</accession>
<feature type="chain" id="PRO_0000098263" description="DNA translocase FtsK">
    <location>
        <begin position="1"/>
        <end position="844"/>
    </location>
</feature>
<feature type="transmembrane region" description="Helical" evidence="2">
    <location>
        <begin position="6"/>
        <end position="26"/>
    </location>
</feature>
<feature type="transmembrane region" description="Helical" evidence="2">
    <location>
        <begin position="45"/>
        <end position="65"/>
    </location>
</feature>
<feature type="transmembrane region" description="Helical" evidence="2">
    <location>
        <begin position="71"/>
        <end position="91"/>
    </location>
</feature>
<feature type="transmembrane region" description="Helical" evidence="2">
    <location>
        <begin position="113"/>
        <end position="133"/>
    </location>
</feature>
<feature type="topological domain" description="Cytoplasmic" evidence="2">
    <location>
        <begin position="134"/>
        <end position="844"/>
    </location>
</feature>
<feature type="domain" description="FtsK" evidence="3">
    <location>
        <begin position="518"/>
        <end position="708"/>
    </location>
</feature>
<feature type="region of interest" description="Disordered" evidence="4">
    <location>
        <begin position="173"/>
        <end position="325"/>
    </location>
</feature>
<feature type="compositionally biased region" description="Basic and acidic residues" evidence="4">
    <location>
        <begin position="183"/>
        <end position="206"/>
    </location>
</feature>
<feature type="compositionally biased region" description="Polar residues" evidence="4">
    <location>
        <begin position="220"/>
        <end position="230"/>
    </location>
</feature>
<feature type="compositionally biased region" description="Basic and acidic residues" evidence="4">
    <location>
        <begin position="263"/>
        <end position="280"/>
    </location>
</feature>
<feature type="compositionally biased region" description="Basic and acidic residues" evidence="4">
    <location>
        <begin position="296"/>
        <end position="314"/>
    </location>
</feature>
<feature type="binding site" evidence="3">
    <location>
        <begin position="538"/>
        <end position="543"/>
    </location>
    <ligand>
        <name>ATP</name>
        <dbReference type="ChEBI" id="CHEBI:30616"/>
    </ligand>
</feature>
<proteinExistence type="inferred from homology"/>
<evidence type="ECO:0000250" key="1"/>
<evidence type="ECO:0000255" key="2"/>
<evidence type="ECO:0000255" key="3">
    <source>
        <dbReference type="PROSITE-ProRule" id="PRU00289"/>
    </source>
</evidence>
<evidence type="ECO:0000256" key="4">
    <source>
        <dbReference type="SAM" id="MobiDB-lite"/>
    </source>
</evidence>
<evidence type="ECO:0000305" key="5"/>
<sequence length="844" mass="94775">MKSKKLYLALIIGVLLAFLTLSSWLGNSGLVGRFGVWFAAINKKYFGYLSLINLPYLAWVLFLLYRAKNPFTEIVLEKTLGHLLGILSLLFLQSSLLNQGEIGNSARLFLHPFIGDFGLYVLIMLMVVISYLILFKLPPKSVFYPYMNKTQSLLKEIYKQCLQAFSPNFSLKKEGFENTPSDSQKKETNNDKEKENLKENPIDENHNTPNEESFLAIPTPYNTTLNNSEPQEGLVQISPHPPTHYTIYPKRNRFDDLTNPTLKEPKQETKEREPTLKKETPTTLKPIMPISASNTENHDKTENHKTPNHPIKEDDLQESPQENPQKENIEENIEEKETQNAPSFSPLTLTSAKKPVMVKELSENKEILDGLDYGEVQKPKDYELPTTQLLNAVCLKETSLDENEIDQKIQDLLSKLRTFKIDGDIIRTYSGPIVTTFEFRPAPSVKVSRILGLSDDLAMTLCAESIRIQAPIKGKDVVGIEIPNSQSQIIYLREILESELFQKSSSPLTLALGKDIVGNPFITDLKKLPHLLIAGTTGSGKSVGVNAMILSLLYKNPPDQLKLVMIDPKMVEFSIYADIPHLLTPIITDPKKAIGALQSVAKEMERRYSLMSEYKVKTIDSYNEQAQSNGVEAFPYLIVVIDELADLMMTGGKEAEFPIARIAQMGRASGLHLIVATQRPSVDVVTGLIKTNLPSRVSFRVGTKIDSKVILDTDGAQSLLGRGDMLFTPPGTNGLVRLHAPFATEDEIKKIVDFIKAQKEVEYDKDFLLEESRMPLDTPNYQGDDILERAKAVILEKKITSTSFLQRQLKIGYNQAATITDELEAQGFLSPRNAKGNREILQNF</sequence>
<reference key="1">
    <citation type="journal article" date="1999" name="Nature">
        <title>Genomic sequence comparison of two unrelated isolates of the human gastric pathogen Helicobacter pylori.</title>
        <authorList>
            <person name="Alm R.A."/>
            <person name="Ling L.-S.L."/>
            <person name="Moir D.T."/>
            <person name="King B.L."/>
            <person name="Brown E.D."/>
            <person name="Doig P.C."/>
            <person name="Smith D.R."/>
            <person name="Noonan B."/>
            <person name="Guild B.C."/>
            <person name="deJonge B.L."/>
            <person name="Carmel G."/>
            <person name="Tummino P.J."/>
            <person name="Caruso A."/>
            <person name="Uria-Nickelsen M."/>
            <person name="Mills D.M."/>
            <person name="Ives C."/>
            <person name="Gibson R."/>
            <person name="Merberg D."/>
            <person name="Mills S.D."/>
            <person name="Jiang Q."/>
            <person name="Taylor D.E."/>
            <person name="Vovis G.F."/>
            <person name="Trust T.J."/>
        </authorList>
    </citation>
    <scope>NUCLEOTIDE SEQUENCE [LARGE SCALE GENOMIC DNA]</scope>
    <source>
        <strain>J99 / ATCC 700824</strain>
    </source>
</reference>
<organism>
    <name type="scientific">Helicobacter pylori (strain J99 / ATCC 700824)</name>
    <name type="common">Campylobacter pylori J99</name>
    <dbReference type="NCBI Taxonomy" id="85963"/>
    <lineage>
        <taxon>Bacteria</taxon>
        <taxon>Pseudomonadati</taxon>
        <taxon>Campylobacterota</taxon>
        <taxon>Epsilonproteobacteria</taxon>
        <taxon>Campylobacterales</taxon>
        <taxon>Helicobacteraceae</taxon>
        <taxon>Helicobacter</taxon>
    </lineage>
</organism>
<gene>
    <name type="primary">ftsK</name>
    <name type="ordered locus">jhp_0335</name>
</gene>
<keyword id="KW-0067">ATP-binding</keyword>
<keyword id="KW-0131">Cell cycle</keyword>
<keyword id="KW-0132">Cell division</keyword>
<keyword id="KW-0997">Cell inner membrane</keyword>
<keyword id="KW-1003">Cell membrane</keyword>
<keyword id="KW-0159">Chromosome partition</keyword>
<keyword id="KW-0238">DNA-binding</keyword>
<keyword id="KW-0472">Membrane</keyword>
<keyword id="KW-0547">Nucleotide-binding</keyword>
<keyword id="KW-0812">Transmembrane</keyword>
<keyword id="KW-1133">Transmembrane helix</keyword>
<dbReference type="EMBL" id="AE001439">
    <property type="protein sequence ID" value="AAD05914.1"/>
    <property type="molecule type" value="Genomic_DNA"/>
</dbReference>
<dbReference type="PIR" id="B71944">
    <property type="entry name" value="B71944"/>
</dbReference>
<dbReference type="RefSeq" id="WP_000837232.1">
    <property type="nucleotide sequence ID" value="NC_000921.1"/>
</dbReference>
<dbReference type="SMR" id="Q9ZM87"/>
<dbReference type="KEGG" id="hpj:jhp_0335"/>
<dbReference type="PATRIC" id="fig|85963.30.peg.677"/>
<dbReference type="eggNOG" id="COG1674">
    <property type="taxonomic scope" value="Bacteria"/>
</dbReference>
<dbReference type="Proteomes" id="UP000000804">
    <property type="component" value="Chromosome"/>
</dbReference>
<dbReference type="GO" id="GO:0005886">
    <property type="term" value="C:plasma membrane"/>
    <property type="evidence" value="ECO:0007669"/>
    <property type="project" value="UniProtKB-SubCell"/>
</dbReference>
<dbReference type="GO" id="GO:0005524">
    <property type="term" value="F:ATP binding"/>
    <property type="evidence" value="ECO:0007669"/>
    <property type="project" value="UniProtKB-KW"/>
</dbReference>
<dbReference type="GO" id="GO:0003677">
    <property type="term" value="F:DNA binding"/>
    <property type="evidence" value="ECO:0007669"/>
    <property type="project" value="UniProtKB-KW"/>
</dbReference>
<dbReference type="GO" id="GO:0051301">
    <property type="term" value="P:cell division"/>
    <property type="evidence" value="ECO:0007669"/>
    <property type="project" value="UniProtKB-KW"/>
</dbReference>
<dbReference type="GO" id="GO:0007059">
    <property type="term" value="P:chromosome segregation"/>
    <property type="evidence" value="ECO:0007669"/>
    <property type="project" value="UniProtKB-KW"/>
</dbReference>
<dbReference type="CDD" id="cd01127">
    <property type="entry name" value="TrwB_TraG_TraD_VirD4"/>
    <property type="match status" value="1"/>
</dbReference>
<dbReference type="Gene3D" id="3.30.980.40">
    <property type="match status" value="1"/>
</dbReference>
<dbReference type="Gene3D" id="3.40.50.300">
    <property type="entry name" value="P-loop containing nucleotide triphosphate hydrolases"/>
    <property type="match status" value="1"/>
</dbReference>
<dbReference type="Gene3D" id="1.10.10.10">
    <property type="entry name" value="Winged helix-like DNA-binding domain superfamily/Winged helix DNA-binding domain"/>
    <property type="match status" value="1"/>
</dbReference>
<dbReference type="InterPro" id="IPR050206">
    <property type="entry name" value="FtsK/SpoIIIE/SftA"/>
</dbReference>
<dbReference type="InterPro" id="IPR041027">
    <property type="entry name" value="FtsK_alpha"/>
</dbReference>
<dbReference type="InterPro" id="IPR002543">
    <property type="entry name" value="FtsK_dom"/>
</dbReference>
<dbReference type="InterPro" id="IPR018541">
    <property type="entry name" value="Ftsk_gamma"/>
</dbReference>
<dbReference type="InterPro" id="IPR027417">
    <property type="entry name" value="P-loop_NTPase"/>
</dbReference>
<dbReference type="InterPro" id="IPR036388">
    <property type="entry name" value="WH-like_DNA-bd_sf"/>
</dbReference>
<dbReference type="InterPro" id="IPR036390">
    <property type="entry name" value="WH_DNA-bd_sf"/>
</dbReference>
<dbReference type="PANTHER" id="PTHR22683:SF41">
    <property type="entry name" value="DNA TRANSLOCASE FTSK"/>
    <property type="match status" value="1"/>
</dbReference>
<dbReference type="PANTHER" id="PTHR22683">
    <property type="entry name" value="SPORULATION PROTEIN RELATED"/>
    <property type="match status" value="1"/>
</dbReference>
<dbReference type="Pfam" id="PF17854">
    <property type="entry name" value="FtsK_alpha"/>
    <property type="match status" value="1"/>
</dbReference>
<dbReference type="Pfam" id="PF09397">
    <property type="entry name" value="FtsK_gamma"/>
    <property type="match status" value="1"/>
</dbReference>
<dbReference type="Pfam" id="PF01580">
    <property type="entry name" value="FtsK_SpoIIIE"/>
    <property type="match status" value="1"/>
</dbReference>
<dbReference type="SMART" id="SM00843">
    <property type="entry name" value="Ftsk_gamma"/>
    <property type="match status" value="1"/>
</dbReference>
<dbReference type="SUPFAM" id="SSF52540">
    <property type="entry name" value="P-loop containing nucleoside triphosphate hydrolases"/>
    <property type="match status" value="1"/>
</dbReference>
<dbReference type="SUPFAM" id="SSF46785">
    <property type="entry name" value="Winged helix' DNA-binding domain"/>
    <property type="match status" value="1"/>
</dbReference>
<dbReference type="PROSITE" id="PS50901">
    <property type="entry name" value="FTSK"/>
    <property type="match status" value="1"/>
</dbReference>
<comment type="function">
    <text evidence="1">Essential cell division protein that coordinates cell division and chromosome segregation. The N-terminus is involved in assembly of the cell-division machinery. The C-terminus functions as a DNA motor that moves dsDNA in an ATP-dependent manner towards the dif recombination site, which is located within the replication terminus region. Translocation stops specifically at Xer-dif sites, where FtsK interacts with the Xer recombinase, allowing activation of chromosome unlinking by recombination. FtsK orienting polar sequences (KOPS) guide the direction of DNA translocation. FtsK can remove proteins from DNA as it translocates, but translocation stops specifically at XerCD-dif site, thereby preventing removal of XerC and XerD from dif (By similarity).</text>
</comment>
<comment type="subunit">
    <text evidence="1">Homohexamer. Forms a ring that surrounds DNA (By similarity).</text>
</comment>
<comment type="subcellular location">
    <subcellularLocation>
        <location evidence="1">Cell inner membrane</location>
        <topology evidence="1">Multi-pass membrane protein</topology>
    </subcellularLocation>
    <text evidence="1">Located at the septum.</text>
</comment>
<comment type="domain">
    <text evidence="1">Consists of an N-terminal domain, which is sufficient for the localization to the septal ring and is required for cell division, followed by a linker domain, and a C-terminal domain, which forms the translocation motor involved in chromosome segregation. The C-terminal domain can be further subdivided into alpha, beta and gamma subdomains. The alpha and beta subdomains multimerise to produce a hexameric ring, contain the nucleotide binding motif and form the DNA pump. The gamma subdomain is a regulatory subdomain that controls translocation of DNA by recognition of KOPS motifs and interacts with XerD recombinase (By similarity).</text>
</comment>
<comment type="similarity">
    <text evidence="5">Belongs to the FtsK/SpoIIIE/SftA family.</text>
</comment>
<protein>
    <recommendedName>
        <fullName>DNA translocase FtsK</fullName>
    </recommendedName>
</protein>
<name>FTSK_HELPJ</name>